<feature type="chain" id="PRO_1000077421" description="Glycerol kinase">
    <location>
        <begin position="1"/>
        <end position="494"/>
    </location>
</feature>
<feature type="binding site" evidence="1">
    <location>
        <position position="12"/>
    </location>
    <ligand>
        <name>ADP</name>
        <dbReference type="ChEBI" id="CHEBI:456216"/>
    </ligand>
</feature>
<feature type="binding site" evidence="1">
    <location>
        <position position="12"/>
    </location>
    <ligand>
        <name>ATP</name>
        <dbReference type="ChEBI" id="CHEBI:30616"/>
    </ligand>
</feature>
<feature type="binding site" evidence="1">
    <location>
        <position position="12"/>
    </location>
    <ligand>
        <name>sn-glycerol 3-phosphate</name>
        <dbReference type="ChEBI" id="CHEBI:57597"/>
    </ligand>
</feature>
<feature type="binding site" evidence="1">
    <location>
        <position position="13"/>
    </location>
    <ligand>
        <name>ATP</name>
        <dbReference type="ChEBI" id="CHEBI:30616"/>
    </ligand>
</feature>
<feature type="binding site" evidence="1">
    <location>
        <position position="14"/>
    </location>
    <ligand>
        <name>ATP</name>
        <dbReference type="ChEBI" id="CHEBI:30616"/>
    </ligand>
</feature>
<feature type="binding site" evidence="1">
    <location>
        <position position="16"/>
    </location>
    <ligand>
        <name>ADP</name>
        <dbReference type="ChEBI" id="CHEBI:456216"/>
    </ligand>
</feature>
<feature type="binding site" evidence="1">
    <location>
        <position position="82"/>
    </location>
    <ligand>
        <name>glycerol</name>
        <dbReference type="ChEBI" id="CHEBI:17754"/>
    </ligand>
</feature>
<feature type="binding site" evidence="1">
    <location>
        <position position="82"/>
    </location>
    <ligand>
        <name>sn-glycerol 3-phosphate</name>
        <dbReference type="ChEBI" id="CHEBI:57597"/>
    </ligand>
</feature>
<feature type="binding site" evidence="1">
    <location>
        <position position="83"/>
    </location>
    <ligand>
        <name>glycerol</name>
        <dbReference type="ChEBI" id="CHEBI:17754"/>
    </ligand>
</feature>
<feature type="binding site" evidence="1">
    <location>
        <position position="83"/>
    </location>
    <ligand>
        <name>sn-glycerol 3-phosphate</name>
        <dbReference type="ChEBI" id="CHEBI:57597"/>
    </ligand>
</feature>
<feature type="binding site" evidence="1">
    <location>
        <position position="134"/>
    </location>
    <ligand>
        <name>glycerol</name>
        <dbReference type="ChEBI" id="CHEBI:17754"/>
    </ligand>
</feature>
<feature type="binding site" evidence="1">
    <location>
        <position position="134"/>
    </location>
    <ligand>
        <name>sn-glycerol 3-phosphate</name>
        <dbReference type="ChEBI" id="CHEBI:57597"/>
    </ligand>
</feature>
<feature type="binding site" evidence="1">
    <location>
        <position position="243"/>
    </location>
    <ligand>
        <name>glycerol</name>
        <dbReference type="ChEBI" id="CHEBI:17754"/>
    </ligand>
</feature>
<feature type="binding site" evidence="1">
    <location>
        <position position="243"/>
    </location>
    <ligand>
        <name>sn-glycerol 3-phosphate</name>
        <dbReference type="ChEBI" id="CHEBI:57597"/>
    </ligand>
</feature>
<feature type="binding site" evidence="1">
    <location>
        <position position="244"/>
    </location>
    <ligand>
        <name>glycerol</name>
        <dbReference type="ChEBI" id="CHEBI:17754"/>
    </ligand>
</feature>
<feature type="binding site" evidence="1">
    <location>
        <position position="265"/>
    </location>
    <ligand>
        <name>ADP</name>
        <dbReference type="ChEBI" id="CHEBI:456216"/>
    </ligand>
</feature>
<feature type="binding site" evidence="1">
    <location>
        <position position="265"/>
    </location>
    <ligand>
        <name>ATP</name>
        <dbReference type="ChEBI" id="CHEBI:30616"/>
    </ligand>
</feature>
<feature type="binding site" evidence="1">
    <location>
        <position position="308"/>
    </location>
    <ligand>
        <name>ADP</name>
        <dbReference type="ChEBI" id="CHEBI:456216"/>
    </ligand>
</feature>
<feature type="binding site" evidence="1">
    <location>
        <position position="308"/>
    </location>
    <ligand>
        <name>ATP</name>
        <dbReference type="ChEBI" id="CHEBI:30616"/>
    </ligand>
</feature>
<feature type="binding site" evidence="1">
    <location>
        <position position="312"/>
    </location>
    <ligand>
        <name>ATP</name>
        <dbReference type="ChEBI" id="CHEBI:30616"/>
    </ligand>
</feature>
<feature type="binding site" evidence="1">
    <location>
        <position position="408"/>
    </location>
    <ligand>
        <name>ADP</name>
        <dbReference type="ChEBI" id="CHEBI:456216"/>
    </ligand>
</feature>
<feature type="binding site" evidence="1">
    <location>
        <position position="408"/>
    </location>
    <ligand>
        <name>ATP</name>
        <dbReference type="ChEBI" id="CHEBI:30616"/>
    </ligand>
</feature>
<feature type="binding site" evidence="1">
    <location>
        <position position="412"/>
    </location>
    <ligand>
        <name>ADP</name>
        <dbReference type="ChEBI" id="CHEBI:456216"/>
    </ligand>
</feature>
<proteinExistence type="inferred from homology"/>
<organism>
    <name type="scientific">Marinomonas sp. (strain MWYL1)</name>
    <dbReference type="NCBI Taxonomy" id="400668"/>
    <lineage>
        <taxon>Bacteria</taxon>
        <taxon>Pseudomonadati</taxon>
        <taxon>Pseudomonadota</taxon>
        <taxon>Gammaproteobacteria</taxon>
        <taxon>Oceanospirillales</taxon>
        <taxon>Oceanospirillaceae</taxon>
        <taxon>Marinomonas</taxon>
    </lineage>
</organism>
<name>GLPK_MARMS</name>
<evidence type="ECO:0000255" key="1">
    <source>
        <dbReference type="HAMAP-Rule" id="MF_00186"/>
    </source>
</evidence>
<sequence>MTHYILAIDQGTTSSRAILFDEKGSRVGQSQQEFPQIFPDDGWVEHDPEDIWSSTLAVCRSVLKDTGIDAQAIATIGITNQRETTILWDIDTGKPVYNAIVWQDRRTSGFCQSLSDQGLSEKVQEKTGLLIDPYFSATKIRWILDNVDGARETAQSGRLAFGTVDSFLLWRLTNGKSHKTDATNAARTMAFNIHTQEWDDELIELLGIGDVLFPEVMDCSADFGVIDASWLGAEIPVNGIAGDQQAALVGQACFTPGMVKSTYGTGCFMILNTGDKAIRSEHKLLTTVGYRLNGKVTYALEGSIFVAGAAIQWLRDGLKLFADAKETQSLAKQALNDDSVYLVPAFTGLGAPYWDPDARGAMIGLTRDTSVADIVSAGLRSVCYQTKDLVGAMAQDGATFSSLRVDGGMVINDVMVQFLSDLLEITVERPCVTETTALGAAFLAGLQVGLYQSLDEIEVLWKADKCFEPTMEKGTGDKLYQGWQKAVDRVRTRD</sequence>
<reference key="1">
    <citation type="submission" date="2007-06" db="EMBL/GenBank/DDBJ databases">
        <title>Complete sequence of Marinomonas sp. MWYL1.</title>
        <authorList>
            <consortium name="US DOE Joint Genome Institute"/>
            <person name="Copeland A."/>
            <person name="Lucas S."/>
            <person name="Lapidus A."/>
            <person name="Barry K."/>
            <person name="Glavina del Rio T."/>
            <person name="Dalin E."/>
            <person name="Tice H."/>
            <person name="Pitluck S."/>
            <person name="Kiss H."/>
            <person name="Brettin T."/>
            <person name="Bruce D."/>
            <person name="Detter J.C."/>
            <person name="Han C."/>
            <person name="Schmutz J."/>
            <person name="Larimer F."/>
            <person name="Land M."/>
            <person name="Hauser L."/>
            <person name="Kyrpides N."/>
            <person name="Kim E."/>
            <person name="Johnston A.W.B."/>
            <person name="Todd J.D."/>
            <person name="Rogers R."/>
            <person name="Wexler M."/>
            <person name="Bond P.L."/>
            <person name="Li Y."/>
            <person name="Richardson P."/>
        </authorList>
    </citation>
    <scope>NUCLEOTIDE SEQUENCE [LARGE SCALE GENOMIC DNA]</scope>
    <source>
        <strain>MWYL1</strain>
    </source>
</reference>
<gene>
    <name evidence="1" type="primary">glpK</name>
    <name type="ordered locus">Mmwyl1_3953</name>
</gene>
<comment type="function">
    <text evidence="1">Key enzyme in the regulation of glycerol uptake and metabolism. Catalyzes the phosphorylation of glycerol to yield sn-glycerol 3-phosphate.</text>
</comment>
<comment type="catalytic activity">
    <reaction evidence="1">
        <text>glycerol + ATP = sn-glycerol 3-phosphate + ADP + H(+)</text>
        <dbReference type="Rhea" id="RHEA:21644"/>
        <dbReference type="ChEBI" id="CHEBI:15378"/>
        <dbReference type="ChEBI" id="CHEBI:17754"/>
        <dbReference type="ChEBI" id="CHEBI:30616"/>
        <dbReference type="ChEBI" id="CHEBI:57597"/>
        <dbReference type="ChEBI" id="CHEBI:456216"/>
        <dbReference type="EC" id="2.7.1.30"/>
    </reaction>
</comment>
<comment type="activity regulation">
    <text evidence="1">Inhibited by fructose 1,6-bisphosphate (FBP).</text>
</comment>
<comment type="pathway">
    <text evidence="1">Polyol metabolism; glycerol degradation via glycerol kinase pathway; sn-glycerol 3-phosphate from glycerol: step 1/1.</text>
</comment>
<comment type="similarity">
    <text evidence="1">Belongs to the FGGY kinase family.</text>
</comment>
<protein>
    <recommendedName>
        <fullName evidence="1">Glycerol kinase</fullName>
        <ecNumber evidence="1">2.7.1.30</ecNumber>
    </recommendedName>
    <alternativeName>
        <fullName evidence="1">ATP:glycerol 3-phosphotransferase</fullName>
    </alternativeName>
    <alternativeName>
        <fullName evidence="1">Glycerokinase</fullName>
        <shortName evidence="1">GK</shortName>
    </alternativeName>
</protein>
<dbReference type="EC" id="2.7.1.30" evidence="1"/>
<dbReference type="EMBL" id="CP000749">
    <property type="protein sequence ID" value="ABR72850.1"/>
    <property type="molecule type" value="Genomic_DNA"/>
</dbReference>
<dbReference type="SMR" id="A6W2C1"/>
<dbReference type="STRING" id="400668.Mmwyl1_3953"/>
<dbReference type="KEGG" id="mmw:Mmwyl1_3953"/>
<dbReference type="eggNOG" id="COG0554">
    <property type="taxonomic scope" value="Bacteria"/>
</dbReference>
<dbReference type="HOGENOM" id="CLU_009281_2_3_6"/>
<dbReference type="OrthoDB" id="9805576at2"/>
<dbReference type="UniPathway" id="UPA00618">
    <property type="reaction ID" value="UER00672"/>
</dbReference>
<dbReference type="GO" id="GO:0005829">
    <property type="term" value="C:cytosol"/>
    <property type="evidence" value="ECO:0007669"/>
    <property type="project" value="TreeGrafter"/>
</dbReference>
<dbReference type="GO" id="GO:0005524">
    <property type="term" value="F:ATP binding"/>
    <property type="evidence" value="ECO:0007669"/>
    <property type="project" value="UniProtKB-UniRule"/>
</dbReference>
<dbReference type="GO" id="GO:0004370">
    <property type="term" value="F:glycerol kinase activity"/>
    <property type="evidence" value="ECO:0000250"/>
    <property type="project" value="UniProtKB"/>
</dbReference>
<dbReference type="GO" id="GO:0019563">
    <property type="term" value="P:glycerol catabolic process"/>
    <property type="evidence" value="ECO:0007669"/>
    <property type="project" value="UniProtKB-UniRule"/>
</dbReference>
<dbReference type="GO" id="GO:0006071">
    <property type="term" value="P:glycerol metabolic process"/>
    <property type="evidence" value="ECO:0000250"/>
    <property type="project" value="UniProtKB"/>
</dbReference>
<dbReference type="GO" id="GO:0006072">
    <property type="term" value="P:glycerol-3-phosphate metabolic process"/>
    <property type="evidence" value="ECO:0007669"/>
    <property type="project" value="InterPro"/>
</dbReference>
<dbReference type="CDD" id="cd07786">
    <property type="entry name" value="FGGY_EcGK_like"/>
    <property type="match status" value="1"/>
</dbReference>
<dbReference type="FunFam" id="3.30.420.40:FF:000007">
    <property type="entry name" value="Glycerol kinase"/>
    <property type="match status" value="1"/>
</dbReference>
<dbReference type="FunFam" id="3.30.420.40:FF:000008">
    <property type="entry name" value="Glycerol kinase"/>
    <property type="match status" value="1"/>
</dbReference>
<dbReference type="Gene3D" id="3.30.420.40">
    <property type="match status" value="2"/>
</dbReference>
<dbReference type="HAMAP" id="MF_00186">
    <property type="entry name" value="Glycerol_kin"/>
    <property type="match status" value="1"/>
</dbReference>
<dbReference type="InterPro" id="IPR043129">
    <property type="entry name" value="ATPase_NBD"/>
</dbReference>
<dbReference type="InterPro" id="IPR000577">
    <property type="entry name" value="Carb_kinase_FGGY"/>
</dbReference>
<dbReference type="InterPro" id="IPR018483">
    <property type="entry name" value="Carb_kinase_FGGY_CS"/>
</dbReference>
<dbReference type="InterPro" id="IPR018485">
    <property type="entry name" value="FGGY_C"/>
</dbReference>
<dbReference type="InterPro" id="IPR018484">
    <property type="entry name" value="FGGY_N"/>
</dbReference>
<dbReference type="InterPro" id="IPR005999">
    <property type="entry name" value="Glycerol_kin"/>
</dbReference>
<dbReference type="NCBIfam" id="TIGR01311">
    <property type="entry name" value="glycerol_kin"/>
    <property type="match status" value="1"/>
</dbReference>
<dbReference type="NCBIfam" id="NF000756">
    <property type="entry name" value="PRK00047.1"/>
    <property type="match status" value="1"/>
</dbReference>
<dbReference type="PANTHER" id="PTHR10196:SF78">
    <property type="entry name" value="GLYCEROL KINASE"/>
    <property type="match status" value="1"/>
</dbReference>
<dbReference type="PANTHER" id="PTHR10196">
    <property type="entry name" value="SUGAR KINASE"/>
    <property type="match status" value="1"/>
</dbReference>
<dbReference type="Pfam" id="PF02782">
    <property type="entry name" value="FGGY_C"/>
    <property type="match status" value="1"/>
</dbReference>
<dbReference type="Pfam" id="PF00370">
    <property type="entry name" value="FGGY_N"/>
    <property type="match status" value="1"/>
</dbReference>
<dbReference type="PIRSF" id="PIRSF000538">
    <property type="entry name" value="GlpK"/>
    <property type="match status" value="1"/>
</dbReference>
<dbReference type="SUPFAM" id="SSF53067">
    <property type="entry name" value="Actin-like ATPase domain"/>
    <property type="match status" value="2"/>
</dbReference>
<dbReference type="PROSITE" id="PS00933">
    <property type="entry name" value="FGGY_KINASES_1"/>
    <property type="match status" value="1"/>
</dbReference>
<keyword id="KW-0067">ATP-binding</keyword>
<keyword id="KW-0319">Glycerol metabolism</keyword>
<keyword id="KW-0418">Kinase</keyword>
<keyword id="KW-0547">Nucleotide-binding</keyword>
<keyword id="KW-0808">Transferase</keyword>
<accession>A6W2C1</accession>